<accession>Q9UHX1</accession>
<accession>A8K8K8</accession>
<accession>Q969E7</accession>
<accession>Q96D94</accession>
<accession>Q96H63</accession>
<accession>Q99628</accession>
<accession>Q9NZA0</accession>
<accession>Q9UJY7</accession>
<keyword id="KW-0002">3D-structure</keyword>
<keyword id="KW-0007">Acetylation</keyword>
<keyword id="KW-0025">Alternative splicing</keyword>
<keyword id="KW-0053">Apoptosis</keyword>
<keyword id="KW-0903">Direct protein sequencing</keyword>
<keyword id="KW-0225">Disease variant</keyword>
<keyword id="KW-0238">DNA-binding</keyword>
<keyword id="KW-1017">Isopeptide bond</keyword>
<keyword id="KW-0507">mRNA processing</keyword>
<keyword id="KW-0508">mRNA splicing</keyword>
<keyword id="KW-0539">Nucleus</keyword>
<keyword id="KW-0597">Phosphoprotein</keyword>
<keyword id="KW-1267">Proteomics identification</keyword>
<keyword id="KW-1185">Reference proteome</keyword>
<keyword id="KW-0677">Repeat</keyword>
<keyword id="KW-0678">Repressor</keyword>
<keyword id="KW-0687">Ribonucleoprotein</keyword>
<keyword id="KW-0694">RNA-binding</keyword>
<keyword id="KW-0804">Transcription</keyword>
<keyword id="KW-0805">Transcription regulation</keyword>
<keyword id="KW-0832">Ubl conjugation</keyword>
<name>PUF60_HUMAN</name>
<protein>
    <recommendedName>
        <fullName evidence="21">Poly(U)-binding-splicing factor PUF60</fullName>
    </recommendedName>
    <alternativeName>
        <fullName evidence="21">60 kDa poly(U)-binding-splicing factor</fullName>
    </alternativeName>
    <alternativeName>
        <fullName evidence="16">FUSE-binding protein-interacting repressor</fullName>
        <shortName evidence="16">FBP-interacting repressor</shortName>
    </alternativeName>
    <alternativeName>
        <fullName evidence="21">Ro-binding protein 1</fullName>
        <shortName>RoBP1</shortName>
    </alternativeName>
    <alternativeName>
        <fullName evidence="21">Siah-binding protein 1</fullName>
        <shortName evidence="21">Siah-BP1</shortName>
    </alternativeName>
</protein>
<feature type="chain" id="PRO_0000299519" description="Poly(U)-binding-splicing factor PUF60">
    <location>
        <begin position="1"/>
        <end position="559"/>
    </location>
</feature>
<feature type="domain" description="RRM 1" evidence="2">
    <location>
        <begin position="129"/>
        <end position="207"/>
    </location>
</feature>
<feature type="domain" description="RRM 2" evidence="2">
    <location>
        <begin position="226"/>
        <end position="304"/>
    </location>
</feature>
<feature type="domain" description="RRM 3; atypical" evidence="2">
    <location>
        <begin position="462"/>
        <end position="549"/>
    </location>
</feature>
<feature type="region of interest" description="Inhibits homodimerization">
    <location>
        <begin position="1"/>
        <end position="516"/>
    </location>
</feature>
<feature type="region of interest" description="Inhibits transcriptional repression, interaction with ERCC3 and apoptosis induction">
    <location>
        <begin position="77"/>
        <end position="559"/>
    </location>
</feature>
<feature type="region of interest" description="Disordered" evidence="3">
    <location>
        <begin position="416"/>
        <end position="437"/>
    </location>
</feature>
<feature type="compositionally biased region" description="Basic and acidic residues" evidence="3">
    <location>
        <begin position="427"/>
        <end position="437"/>
    </location>
</feature>
<feature type="modified residue" description="Phosphothreonine" evidence="22 24 25">
    <location>
        <position position="60"/>
    </location>
</feature>
<feature type="modified residue" description="Phosphoserine" evidence="24">
    <location>
        <position position="112"/>
    </location>
</feature>
<feature type="modified residue" description="Phosphoserine" evidence="1">
    <location>
        <position position="244"/>
    </location>
</feature>
<feature type="modified residue" description="N6-acetyllysine" evidence="23">
    <location>
        <position position="251"/>
    </location>
</feature>
<feature type="modified residue" description="Phosphothreonine" evidence="24">
    <location>
        <position position="314"/>
    </location>
</feature>
<feature type="modified residue" description="N6-acetyllysine" evidence="23">
    <location>
        <position position="454"/>
    </location>
</feature>
<feature type="cross-link" description="Glycyl lysine isopeptide (Lys-Gly) (interchain with G-Cter in SUMO2)" evidence="27">
    <location>
        <position position="43"/>
    </location>
</feature>
<feature type="cross-link" description="Glycyl lysine isopeptide (Lys-Gly) (interchain with G-Cter in SUMO2)" evidence="27">
    <location>
        <position position="80"/>
    </location>
</feature>
<feature type="cross-link" description="Glycyl lysine isopeptide (Lys-Gly) (interchain with G-Cter in SUMO2)" evidence="27">
    <location>
        <position position="419"/>
    </location>
</feature>
<feature type="cross-link" description="Glycyl lysine isopeptide (Lys-Gly) (interchain with G-Cter in SUMO2)" evidence="26 27">
    <location>
        <position position="458"/>
    </location>
</feature>
<feature type="splice variant" id="VSP_027717" description="In isoform 3 and isoform 4." evidence="15">
    <location>
        <begin position="1"/>
        <end position="43"/>
    </location>
</feature>
<feature type="splice variant" id="VSP_027718" description="In isoform 5 and isoform 6." evidence="20">
    <location>
        <begin position="9"/>
        <end position="37"/>
    </location>
</feature>
<feature type="splice variant" id="VSP_027719" description="In isoform 2, isoform 4 and isoform 6." evidence="14 15 19">
    <location>
        <begin position="101"/>
        <end position="117"/>
    </location>
</feature>
<feature type="sequence variant" id="VAR_070939" description="In VRJS; loss of function mutation; results in altered dosage of different PUF60 protein forms and abnormal splicing profile of several target genes; dbSNP:rs398123001." evidence="11">
    <original>H</original>
    <variation>Y</variation>
    <location>
        <position position="169"/>
    </location>
</feature>
<feature type="sequence conflict" description="In Ref. 7; AAB41656." evidence="20" ref="7">
    <original>T</original>
    <variation>R</variation>
    <location>
        <position position="3"/>
    </location>
</feature>
<feature type="sequence conflict" description="In Ref. 7; AAB41656." evidence="20" ref="7">
    <original>R</original>
    <variation>G</variation>
    <location>
        <position position="123"/>
    </location>
</feature>
<feature type="helix" evidence="34">
    <location>
        <begin position="115"/>
        <end position="128"/>
    </location>
</feature>
<feature type="strand" evidence="34">
    <location>
        <begin position="130"/>
        <end position="134"/>
    </location>
</feature>
<feature type="helix" evidence="34">
    <location>
        <begin position="142"/>
        <end position="149"/>
    </location>
</feature>
<feature type="helix" evidence="34">
    <location>
        <begin position="150"/>
        <end position="152"/>
    </location>
</feature>
<feature type="strand" evidence="34">
    <location>
        <begin position="155"/>
        <end position="160"/>
    </location>
</feature>
<feature type="turn" evidence="34">
    <location>
        <begin position="164"/>
        <end position="167"/>
    </location>
</feature>
<feature type="strand" evidence="34">
    <location>
        <begin position="173"/>
        <end position="179"/>
    </location>
</feature>
<feature type="helix" evidence="34">
    <location>
        <begin position="180"/>
        <end position="190"/>
    </location>
</feature>
<feature type="strand" evidence="33">
    <location>
        <begin position="194"/>
        <end position="199"/>
    </location>
</feature>
<feature type="strand" evidence="34">
    <location>
        <begin position="201"/>
        <end position="203"/>
    </location>
</feature>
<feature type="helix" evidence="34">
    <location>
        <begin position="208"/>
        <end position="211"/>
    </location>
</feature>
<feature type="helix" evidence="34">
    <location>
        <begin position="214"/>
        <end position="222"/>
    </location>
</feature>
<feature type="strand" evidence="34">
    <location>
        <begin position="225"/>
        <end position="231"/>
    </location>
</feature>
<feature type="strand" evidence="29">
    <location>
        <begin position="235"/>
        <end position="237"/>
    </location>
</feature>
<feature type="helix" evidence="34">
    <location>
        <begin position="239"/>
        <end position="246"/>
    </location>
</feature>
<feature type="helix" evidence="34">
    <location>
        <begin position="247"/>
        <end position="249"/>
    </location>
</feature>
<feature type="strand" evidence="34">
    <location>
        <begin position="252"/>
        <end position="259"/>
    </location>
</feature>
<feature type="turn" evidence="34">
    <location>
        <begin position="261"/>
        <end position="264"/>
    </location>
</feature>
<feature type="strand" evidence="34">
    <location>
        <begin position="266"/>
        <end position="276"/>
    </location>
</feature>
<feature type="helix" evidence="34">
    <location>
        <begin position="277"/>
        <end position="286"/>
    </location>
</feature>
<feature type="strand" evidence="30">
    <location>
        <begin position="293"/>
        <end position="296"/>
    </location>
</feature>
<feature type="strand" evidence="34">
    <location>
        <begin position="298"/>
        <end position="301"/>
    </location>
</feature>
<feature type="strand" evidence="33">
    <location>
        <begin position="306"/>
        <end position="309"/>
    </location>
</feature>
<feature type="helix" evidence="32">
    <location>
        <begin position="445"/>
        <end position="448"/>
    </location>
</feature>
<feature type="turn" evidence="32">
    <location>
        <begin position="449"/>
        <end position="452"/>
    </location>
</feature>
<feature type="helix" evidence="32">
    <location>
        <begin position="453"/>
        <end position="459"/>
    </location>
</feature>
<feature type="strand" evidence="32">
    <location>
        <begin position="463"/>
        <end position="468"/>
    </location>
</feature>
<feature type="helix" evidence="32">
    <location>
        <begin position="472"/>
        <end position="474"/>
    </location>
</feature>
<feature type="helix" evidence="32">
    <location>
        <begin position="479"/>
        <end position="487"/>
    </location>
</feature>
<feature type="turn" evidence="32">
    <location>
        <begin position="488"/>
        <end position="490"/>
    </location>
</feature>
<feature type="strand" evidence="32">
    <location>
        <begin position="493"/>
        <end position="506"/>
    </location>
</feature>
<feature type="strand" evidence="32">
    <location>
        <begin position="510"/>
        <end position="521"/>
    </location>
</feature>
<feature type="helix" evidence="32">
    <location>
        <begin position="522"/>
        <end position="532"/>
    </location>
</feature>
<feature type="strand" evidence="31">
    <location>
        <begin position="536"/>
        <end position="541"/>
    </location>
</feature>
<feature type="strand" evidence="32">
    <location>
        <begin position="543"/>
        <end position="547"/>
    </location>
</feature>
<feature type="helix" evidence="32">
    <location>
        <begin position="549"/>
        <end position="553"/>
    </location>
</feature>
<feature type="strand" evidence="28">
    <location>
        <begin position="557"/>
        <end position="559"/>
    </location>
</feature>
<feature type="cross-link" description="Glycyl lysine isopeptide (Lys-Gly) (interchain with G-Cter in SUMO2)" evidence="26 27">
    <location sequence="Q9UHX1-5">
        <position position="14"/>
    </location>
</feature>
<feature type="cross-link" description="Glycyl lysine isopeptide (Lys-Gly) (interchain with G-Cter in SUMO2)" evidence="26 27">
    <location sequence="Q9UHX1-6">
        <position position="14"/>
    </location>
</feature>
<sequence>MATATIALQVNGQQGGGSEPAAAAAVVAAGDKWKPPQGTDSIKMENGQSTAAKLGLPPLTPEQQEALQKAKKYAMEQSIKSVLVKQTIAHQQQQLTNLQMAAVTMGFGDPLSPLQSMAAQRQRALAIMCRVYVGSIYYELGEDTIRQAFAPFGPIKSIDMSWDSVTMKHKGFAFVEYEVPEAAQLALEQMNSVMLGGRNIKVGRPSNIGQAQPIIDQLAEEARAFNRIYVASVHQDLSDDDIKSVFEAFGKIKSCTLARDPTTGKHKGYGFIEYEKAQSSQDAVSSMNLFDLGGQYLRVGKAVTPPMPLLTPATPGGLPPAAAVAAAAATAKITAQEAVAGAAVLGTLGTPGLVSPALTLAQPLGTLPQAVMAAQAPGVITGVTPARPPIPVTIPSVGVVNPILASPPTLGLLEPKKEKEEEELFPESERPEMLSEQEHMSISGSSARHMVMQKLLRKQESTVMVLRNMVDPKDIDDDLEGEVTEECGKFGAVNRVIIYQEKQGEEEDAEIIVKIFVEFSIASETHKAIQALNGRWFAGRKVVAEVYDQERFDNSDLSA</sequence>
<comment type="function">
    <text evidence="4 6 7 8 9 10">DNA- and RNA-binding protein, involved in several nuclear processes such as pre-mRNA splicing, apoptosis and transcription regulation. In association with FUBP1 regulates MYC transcription at the P2 promoter through the core-TFIIH basal transcription factor. Acts as a transcriptional repressor through the core-TFIIH basal transcription factor. Represses FUBP1-induced transcriptional activation but not basal transcription. Decreases ERCC3 helicase activity. Does not repress TFIIH-mediated transcription in xeroderma pigmentosum complementation group B (XPB) cells. Is also involved in pre-mRNA splicing. Promotes splicing of an intron with weak 3'-splice site and pyrimidine tract in a cooperative manner with U2AF2. Involved in apoptosis induction when overexpressed in HeLa cells. Isoform 6 failed to repress MYC transcription and inhibited FIR-induced apoptosis in colorectal cancer. Isoform 6 may contribute to tumor progression by enabling increased MYC expression and greater resistance to apoptosis in tumors than in normal cells. Modulates alternative splicing of several mRNAs. Binds to relaxed DNA of active promoter regions. Binds to the pyrimidine tract and 3'-splice site regions of pre-mRNA; binding is enhanced in presence of U2AF2. Binds to Y5 RNA in association with RO60. Binds to poly(U) RNA.</text>
</comment>
<comment type="subunit">
    <text evidence="4 5 6 7 10 12">Homodimer (PubMed:10606266). Associates with the spliceosome (PubMed:17579712). Found in a complex with RO60 and Y5 RNA (PubMed:10668799). Found in a complex with FUBP1 and far upstream element (FUSE) DNA segment (PubMed:10882074). Interacts directly with ERCC3 (PubMed:11239393). Interacts with CDK7 and GTF2H1 (PubMed:10882074). Interacts with SRSF11/P54 (PubMed:10606266). Does not interact with ERCC3 in xeroderma pigmentosum complementation group B (XPB) cells (PubMed:11239393). Interacts with ARGLU1; interaction may be involved in ARGLU1-mediated modulation of alternative splicing (PubMed:30698747).</text>
</comment>
<comment type="interaction">
    <interactant intactId="EBI-1053259">
        <id>Q9UHX1</id>
    </interactant>
    <interactant intactId="EBI-2808785">
        <id>Q9NWB6</id>
        <label>ARGLU1</label>
    </interactant>
    <organismsDiffer>false</organismsDiffer>
    <experiments>4</experiments>
</comment>
<comment type="interaction">
    <interactant intactId="EBI-1053259">
        <id>Q9UHX1</id>
    </interactant>
    <interactant intactId="EBI-4401082">
        <id>Q96BM9</id>
        <label>ARL8A</label>
    </interactant>
    <organismsDiffer>false</organismsDiffer>
    <experiments>3</experiments>
</comment>
<comment type="interaction">
    <interactant intactId="EBI-1053259">
        <id>Q9UHX1</id>
    </interactant>
    <interactant intactId="EBI-747707">
        <id>Q969J3</id>
        <label>BORCS5</label>
    </interactant>
    <organismsDiffer>false</organismsDiffer>
    <experiments>4</experiments>
</comment>
<comment type="interaction">
    <interactant intactId="EBI-1053259">
        <id>Q9UHX1</id>
    </interactant>
    <interactant intactId="EBI-766279">
        <id>O00555</id>
        <label>CACNA1A</label>
    </interactant>
    <organismsDiffer>false</organismsDiffer>
    <experiments>2</experiments>
</comment>
<comment type="interaction">
    <interactant intactId="EBI-1053259">
        <id>Q9UHX1</id>
    </interactant>
    <interactant intactId="EBI-395261">
        <id>P24863</id>
        <label>CCNC</label>
    </interactant>
    <organismsDiffer>false</organismsDiffer>
    <experiments>3</experiments>
</comment>
<comment type="interaction">
    <interactant intactId="EBI-1053259">
        <id>Q9UHX1</id>
    </interactant>
    <interactant intactId="EBI-745878">
        <id>Q9H0B3</id>
        <label>IQCN</label>
    </interactant>
    <organismsDiffer>false</organismsDiffer>
    <experiments>3</experiments>
</comment>
<comment type="interaction">
    <interactant intactId="EBI-1053259">
        <id>Q9UHX1</id>
    </interactant>
    <interactant intactId="EBI-751942">
        <id>Q7Z7F0</id>
        <label>KHDC4</label>
    </interactant>
    <organismsDiffer>false</organismsDiffer>
    <experiments>3</experiments>
</comment>
<comment type="interaction">
    <interactant intactId="EBI-1053259">
        <id>Q9UHX1</id>
    </interactant>
    <interactant intactId="EBI-514199">
        <id>Q9H204</id>
        <label>MED28</label>
    </interactant>
    <organismsDiffer>false</organismsDiffer>
    <experiments>6</experiments>
</comment>
<comment type="interaction">
    <interactant intactId="EBI-1053259">
        <id>Q9UHX1</id>
    </interactant>
    <interactant intactId="EBI-946095">
        <id>Q15365</id>
        <label>PCBP1</label>
    </interactant>
    <organismsDiffer>false</organismsDiffer>
    <experiments>2</experiments>
</comment>
<comment type="interaction">
    <interactant intactId="EBI-1053259">
        <id>Q9UHX1</id>
    </interactant>
    <interactant intactId="EBI-710402">
        <id>Q96I34</id>
        <label>PPP1R16A</label>
    </interactant>
    <organismsDiffer>false</organismsDiffer>
    <experiments>2</experiments>
</comment>
<comment type="interaction">
    <interactant intactId="EBI-1053259">
        <id>Q9UHX1</id>
    </interactant>
    <interactant intactId="EBI-1053259">
        <id>Q9UHX1</id>
        <label>PUF60</label>
    </interactant>
    <organismsDiffer>false</organismsDiffer>
    <experiments>4</experiments>
</comment>
<comment type="interaction">
    <interactant intactId="EBI-1053259">
        <id>Q9UHX1</id>
    </interactant>
    <interactant intactId="EBI-2798044">
        <id>Q2TAL8</id>
        <label>QRICH1</label>
    </interactant>
    <organismsDiffer>false</organismsDiffer>
    <experiments>3</experiments>
</comment>
<comment type="interaction">
    <interactant intactId="EBI-1053259">
        <id>Q9UHX1</id>
    </interactant>
    <interactant intactId="EBI-954531">
        <id>P54727</id>
        <label>RAD23B</label>
    </interactant>
    <organismsDiffer>false</organismsDiffer>
    <experiments>3</experiments>
</comment>
<comment type="interaction">
    <interactant intactId="EBI-1053259">
        <id>Q9UHX1</id>
    </interactant>
    <interactant intactId="EBI-751683">
        <id>Q9UHR5</id>
        <label>SAP30BP</label>
    </interactant>
    <organismsDiffer>false</organismsDiffer>
    <experiments>10</experiments>
</comment>
<comment type="interaction">
    <interactant intactId="EBI-1053259">
        <id>Q9UHX1</id>
    </interactant>
    <interactant intactId="EBI-727004">
        <id>O00560</id>
        <label>SDCBP</label>
    </interactant>
    <organismsDiffer>false</organismsDiffer>
    <experiments>3</experiments>
</comment>
<comment type="interaction">
    <interactant intactId="EBI-1053259">
        <id>Q9UHX1</id>
    </interactant>
    <interactant intactId="EBI-747107">
        <id>Q8IUQ4</id>
        <label>SIAH1</label>
    </interactant>
    <organismsDiffer>false</organismsDiffer>
    <experiments>7</experiments>
</comment>
<comment type="interaction">
    <interactant intactId="EBI-1053259">
        <id>Q9UHX1</id>
    </interactant>
    <interactant intactId="EBI-1051785">
        <id>Q05519</id>
        <label>SRSF11</label>
    </interactant>
    <organismsDiffer>false</organismsDiffer>
    <experiments>8</experiments>
</comment>
<comment type="interaction">
    <interactant intactId="EBI-1053259">
        <id>Q9UHX1</id>
    </interactant>
    <interactant intactId="EBI-742339">
        <id>P26368</id>
        <label>U2AF2</label>
    </interactant>
    <organismsDiffer>false</organismsDiffer>
    <experiments>6</experiments>
</comment>
<comment type="interaction">
    <interactant intactId="EBI-1053259">
        <id>Q9UHX1</id>
    </interactant>
    <interactant intactId="EBI-10180829">
        <id>Q7KZS0</id>
        <label>UBE2I</label>
    </interactant>
    <organismsDiffer>false</organismsDiffer>
    <experiments>3</experiments>
</comment>
<comment type="interaction">
    <interactant intactId="EBI-1053259">
        <id>Q9UHX1</id>
    </interactant>
    <interactant intactId="EBI-372073">
        <id>Q9HAU5</id>
        <label>UPF2</label>
    </interactant>
    <organismsDiffer>false</organismsDiffer>
    <experiments>3</experiments>
</comment>
<comment type="interaction">
    <interactant intactId="EBI-1053259">
        <id>Q9UHX1</id>
    </interactant>
    <interactant intactId="EBI-746479">
        <id>O60844</id>
        <label>ZG16</label>
    </interactant>
    <organismsDiffer>false</organismsDiffer>
    <experiments>3</experiments>
</comment>
<comment type="interaction">
    <interactant intactId="EBI-11529177">
        <id>Q9UHX1-2</id>
    </interactant>
    <interactant intactId="EBI-742054">
        <id>Q96D03</id>
        <label>DDIT4L</label>
    </interactant>
    <organismsDiffer>false</organismsDiffer>
    <experiments>3</experiments>
</comment>
<comment type="interaction">
    <interactant intactId="EBI-11529177">
        <id>Q9UHX1-2</id>
    </interactant>
    <interactant intactId="EBI-12156897">
        <id>Q9BXU8</id>
        <label>FTHL17</label>
    </interactant>
    <organismsDiffer>false</organismsDiffer>
    <experiments>3</experiments>
</comment>
<comment type="interaction">
    <interactant intactId="EBI-11529177">
        <id>Q9UHX1-2</id>
    </interactant>
    <interactant intactId="EBI-5455665">
        <id>Q96AE4-1</id>
        <label>FUBP1</label>
    </interactant>
    <organismsDiffer>false</organismsDiffer>
    <experiments>2</experiments>
</comment>
<comment type="interaction">
    <interactant intactId="EBI-11529177">
        <id>Q9UHX1-2</id>
    </interactant>
    <interactant intactId="EBI-12121668">
        <id>Q96AE4-2</id>
        <label>FUBP1</label>
    </interactant>
    <organismsDiffer>false</organismsDiffer>
    <experiments>3</experiments>
</comment>
<comment type="interaction">
    <interactant intactId="EBI-11529177">
        <id>Q9UHX1-2</id>
    </interactant>
    <interactant intactId="EBI-354056">
        <id>P04406</id>
        <label>GAPDH</label>
    </interactant>
    <organismsDiffer>false</organismsDiffer>
    <experiments>3</experiments>
</comment>
<comment type="interaction">
    <interactant intactId="EBI-11529177">
        <id>Q9UHX1-2</id>
    </interactant>
    <interactant intactId="EBI-466029">
        <id>P42858</id>
        <label>HTT</label>
    </interactant>
    <organismsDiffer>false</organismsDiffer>
    <experiments>6</experiments>
</comment>
<comment type="interaction">
    <interactant intactId="EBI-11529177">
        <id>Q9UHX1-2</id>
    </interactant>
    <interactant intactId="EBI-9089060">
        <id>Q7Z7F0-4</id>
        <label>KHDC4</label>
    </interactant>
    <organismsDiffer>false</organismsDiffer>
    <experiments>10</experiments>
</comment>
<comment type="interaction">
    <interactant intactId="EBI-11529177">
        <id>Q9UHX1-2</id>
    </interactant>
    <interactant intactId="EBI-11983983">
        <id>P57721-2</id>
        <label>PCBP3</label>
    </interactant>
    <organismsDiffer>false</organismsDiffer>
    <experiments>3</experiments>
</comment>
<comment type="interaction">
    <interactant intactId="EBI-11529177">
        <id>Q9UHX1-2</id>
    </interactant>
    <interactant intactId="EBI-11529177">
        <id>Q9UHX1-2</id>
        <label>PUF60</label>
    </interactant>
    <organismsDiffer>false</organismsDiffer>
    <experiments>3</experiments>
</comment>
<comment type="interaction">
    <interactant intactId="EBI-11529177">
        <id>Q9UHX1-2</id>
    </interactant>
    <interactant intactId="EBI-954531">
        <id>P54727</id>
        <label>RAD23B</label>
    </interactant>
    <organismsDiffer>false</organismsDiffer>
    <experiments>3</experiments>
</comment>
<comment type="interaction">
    <interactant intactId="EBI-11529177">
        <id>Q9UHX1-2</id>
    </interactant>
    <interactant intactId="EBI-12223157">
        <id>Q15637-4</id>
        <label>SF1</label>
    </interactant>
    <organismsDiffer>false</organismsDiffer>
    <experiments>3</experiments>
</comment>
<comment type="interaction">
    <interactant intactId="EBI-11529177">
        <id>Q9UHX1-2</id>
    </interactant>
    <interactant intactId="EBI-11975029">
        <id>Q05519-2</id>
        <label>SRSF11</label>
    </interactant>
    <organismsDiffer>false</organismsDiffer>
    <experiments>6</experiments>
</comment>
<comment type="interaction">
    <interactant intactId="EBI-11529177">
        <id>Q9UHX1-2</id>
    </interactant>
    <interactant intactId="EBI-1560063">
        <id>Q6P1X5</id>
        <label>TAF2</label>
    </interactant>
    <organismsDiffer>false</organismsDiffer>
    <experiments>3</experiments>
</comment>
<comment type="interaction">
    <interactant intactId="EBI-11529177">
        <id>Q9UHX1-2</id>
    </interactant>
    <interactant intactId="EBI-12001016">
        <id>P07101-3</id>
        <label>TH</label>
    </interactant>
    <organismsDiffer>false</organismsDiffer>
    <experiments>3</experiments>
</comment>
<comment type="interaction">
    <interactant intactId="EBI-11529177">
        <id>Q9UHX1-2</id>
    </interactant>
    <interactant intactId="EBI-11097439">
        <id>P26368-2</id>
        <label>U2AF2</label>
    </interactant>
    <organismsDiffer>false</organismsDiffer>
    <experiments>3</experiments>
</comment>
<comment type="interaction">
    <interactant intactId="EBI-11529177">
        <id>Q9UHX1-2</id>
    </interactant>
    <interactant intactId="EBI-17208936">
        <id>P0CB47</id>
        <label>UBTFL1</label>
    </interactant>
    <organismsDiffer>false</organismsDiffer>
    <experiments>3</experiments>
</comment>
<comment type="interaction">
    <interactant intactId="EBI-11529177">
        <id>Q9UHX1-2</id>
    </interactant>
    <interactant intactId="EBI-746479">
        <id>O60844</id>
        <label>ZG16</label>
    </interactant>
    <organismsDiffer>false</organismsDiffer>
    <experiments>3</experiments>
</comment>
<comment type="interaction">
    <interactant intactId="EBI-11526420">
        <id>Q9UHX1-5</id>
    </interactant>
    <interactant intactId="EBI-9089060">
        <id>Q7Z7F0-4</id>
        <label>KHDC4</label>
    </interactant>
    <organismsDiffer>false</organismsDiffer>
    <experiments>3</experiments>
</comment>
<comment type="interaction">
    <interactant intactId="EBI-11085298">
        <id>Q9UHX1-6</id>
    </interactant>
    <interactant intactId="EBI-466029">
        <id>P42858</id>
        <label>HTT</label>
    </interactant>
    <organismsDiffer>false</organismsDiffer>
    <experiments>9</experiments>
</comment>
<comment type="interaction">
    <interactant intactId="EBI-11085298">
        <id>Q9UHX1-6</id>
    </interactant>
    <interactant intactId="EBI-9089060">
        <id>Q7Z7F0-4</id>
        <label>KHDC4</label>
    </interactant>
    <organismsDiffer>false</organismsDiffer>
    <experiments>3</experiments>
</comment>
<comment type="subcellular location">
    <subcellularLocation>
        <location evidence="4 5 10">Nucleus</location>
    </subcellularLocation>
    <text evidence="5">Colocalizes partially with RO60.</text>
</comment>
<comment type="alternative products">
    <event type="alternative splicing"/>
    <isoform>
        <id>Q9UHX1-1</id>
        <name>1</name>
        <sequence type="displayed"/>
    </isoform>
    <isoform>
        <id>Q9UHX1-2</id>
        <name>2</name>
        <sequence type="described" ref="VSP_027719"/>
    </isoform>
    <isoform>
        <id>Q9UHX1-3</id>
        <name>3</name>
        <sequence type="described" ref="VSP_027717"/>
    </isoform>
    <isoform>
        <id>Q9UHX1-4</id>
        <name>4</name>
        <sequence type="described" ref="VSP_027717 VSP_027719"/>
    </isoform>
    <isoform>
        <id>Q9UHX1-5</id>
        <name>5</name>
        <sequence type="described" ref="VSP_027718"/>
    </isoform>
    <isoform>
        <id>Q9UHX1-6</id>
        <name>6</name>
        <sequence type="described" ref="VSP_027718 VSP_027719"/>
    </isoform>
</comment>
<comment type="tissue specificity">
    <text evidence="5 8">Isoform 2 is expressed in colonic epithelium and colorectal epithelium cancer (at protein level). Isoform 6 is expressed in colorectal epithelial cancer but below detection level in colonic epithelium. Expressed in heart, brain, placenta, lung, liver, skeletal muscle, kidney, pancreas, spleen, thymus, prostate, testis, ovary, small intestine, colon and peripheral blood leukocytes.</text>
</comment>
<comment type="domain">
    <text>The third RNA recognition motif, called PUMP domain, is atypical and may rather mediate homodimerization and/or protein-protein interactions.</text>
</comment>
<comment type="disease" evidence="11">
    <disease id="DI-03999">
        <name>Verheij syndrome</name>
        <acronym>VRJS</acronym>
        <description>A syndrome characterized by growth retardation, delayed psychomotor development, dysmorphic facial features, and skeletal, mainly vertebral, abnormalities. Additional variable features may include coloboma, renal defects, and cardiac defects.</description>
        <dbReference type="MIM" id="615583"/>
    </disease>
    <text>The disease is caused by variants affecting the gene represented in this entry.</text>
</comment>
<comment type="miscellaneous">
    <text>Does not repress TFIIH-mediated transcription in xeroderma pigmentosum complementation group B (XPB) cells.</text>
</comment>
<comment type="similarity">
    <text evidence="20">Belongs to the RRM half pint family.</text>
</comment>
<reference key="1">
    <citation type="journal article" date="2000" name="Mol. Cell">
        <title>The FBP interacting repressor targets TFIIH to inhibit activated transcription.</title>
        <authorList>
            <person name="Liu J."/>
            <person name="He L."/>
            <person name="Collins I."/>
            <person name="Ge H."/>
            <person name="Libutti D."/>
            <person name="Li J."/>
            <person name="Egly J.-M."/>
            <person name="Levens D."/>
        </authorList>
    </citation>
    <scope>NUCLEOTIDE SEQUENCE [MRNA] (ISOFORM 2)</scope>
    <scope>FUNCTION</scope>
    <scope>IDENTIFICATION IN A COMPLEX WITH FUBP1 AND FUSE DNA</scope>
    <scope>INTERACTION WITH CDK7; ERCC3; FUBP1 AND GTF2H1</scope>
</reference>
<reference key="2">
    <citation type="journal article" date="2000" name="RNA">
        <title>Interaction cloning and characterization of RoBPI, a novel protein binding to human Ro ribonucleoproteins.</title>
        <authorList>
            <person name="Bouffard P."/>
            <person name="Barbar E."/>
            <person name="Briere F."/>
            <person name="Boire G."/>
        </authorList>
    </citation>
    <scope>NUCLEOTIDE SEQUENCE [MRNA] (ISOFORM 1)</scope>
    <scope>ALTERNATIVE SPLICING (ISOFORM 5)</scope>
    <scope>IDENTIFICATION IN A COMPLEX WITH RO60 AND Y5 RNA</scope>
    <scope>RNA-BINDING</scope>
    <scope>SUBCELLULAR LOCATION</scope>
    <scope>TISSUE SPECIFICITY</scope>
</reference>
<reference key="3">
    <citation type="submission" date="2004-06" db="EMBL/GenBank/DDBJ databases">
        <title>Cloning of human full open reading frames in Gateway(TM) system entry vector (pDONR201).</title>
        <authorList>
            <person name="Ebert L."/>
            <person name="Schick M."/>
            <person name="Neubert P."/>
            <person name="Schatten R."/>
            <person name="Henze S."/>
            <person name="Korn B."/>
        </authorList>
    </citation>
    <scope>NUCLEOTIDE SEQUENCE [LARGE SCALE MRNA] (ISOFORM 1)</scope>
</reference>
<reference key="4">
    <citation type="journal article" date="2004" name="Nat. Genet.">
        <title>Complete sequencing and characterization of 21,243 full-length human cDNAs.</title>
        <authorList>
            <person name="Ota T."/>
            <person name="Suzuki Y."/>
            <person name="Nishikawa T."/>
            <person name="Otsuki T."/>
            <person name="Sugiyama T."/>
            <person name="Irie R."/>
            <person name="Wakamatsu A."/>
            <person name="Hayashi K."/>
            <person name="Sato H."/>
            <person name="Nagai K."/>
            <person name="Kimura K."/>
            <person name="Makita H."/>
            <person name="Sekine M."/>
            <person name="Obayashi M."/>
            <person name="Nishi T."/>
            <person name="Shibahara T."/>
            <person name="Tanaka T."/>
            <person name="Ishii S."/>
            <person name="Yamamoto J."/>
            <person name="Saito K."/>
            <person name="Kawai Y."/>
            <person name="Isono Y."/>
            <person name="Nakamura Y."/>
            <person name="Nagahari K."/>
            <person name="Murakami K."/>
            <person name="Yasuda T."/>
            <person name="Iwayanagi T."/>
            <person name="Wagatsuma M."/>
            <person name="Shiratori A."/>
            <person name="Sudo H."/>
            <person name="Hosoiri T."/>
            <person name="Kaku Y."/>
            <person name="Kodaira H."/>
            <person name="Kondo H."/>
            <person name="Sugawara M."/>
            <person name="Takahashi M."/>
            <person name="Kanda K."/>
            <person name="Yokoi T."/>
            <person name="Furuya T."/>
            <person name="Kikkawa E."/>
            <person name="Omura Y."/>
            <person name="Abe K."/>
            <person name="Kamihara K."/>
            <person name="Katsuta N."/>
            <person name="Sato K."/>
            <person name="Tanikawa M."/>
            <person name="Yamazaki M."/>
            <person name="Ninomiya K."/>
            <person name="Ishibashi T."/>
            <person name="Yamashita H."/>
            <person name="Murakawa K."/>
            <person name="Fujimori K."/>
            <person name="Tanai H."/>
            <person name="Kimata M."/>
            <person name="Watanabe M."/>
            <person name="Hiraoka S."/>
            <person name="Chiba Y."/>
            <person name="Ishida S."/>
            <person name="Ono Y."/>
            <person name="Takiguchi S."/>
            <person name="Watanabe S."/>
            <person name="Yosida M."/>
            <person name="Hotuta T."/>
            <person name="Kusano J."/>
            <person name="Kanehori K."/>
            <person name="Takahashi-Fujii A."/>
            <person name="Hara H."/>
            <person name="Tanase T.-O."/>
            <person name="Nomura Y."/>
            <person name="Togiya S."/>
            <person name="Komai F."/>
            <person name="Hara R."/>
            <person name="Takeuchi K."/>
            <person name="Arita M."/>
            <person name="Imose N."/>
            <person name="Musashino K."/>
            <person name="Yuuki H."/>
            <person name="Oshima A."/>
            <person name="Sasaki N."/>
            <person name="Aotsuka S."/>
            <person name="Yoshikawa Y."/>
            <person name="Matsunawa H."/>
            <person name="Ichihara T."/>
            <person name="Shiohata N."/>
            <person name="Sano S."/>
            <person name="Moriya S."/>
            <person name="Momiyama H."/>
            <person name="Satoh N."/>
            <person name="Takami S."/>
            <person name="Terashima Y."/>
            <person name="Suzuki O."/>
            <person name="Nakagawa S."/>
            <person name="Senoh A."/>
            <person name="Mizoguchi H."/>
            <person name="Goto Y."/>
            <person name="Shimizu F."/>
            <person name="Wakebe H."/>
            <person name="Hishigaki H."/>
            <person name="Watanabe T."/>
            <person name="Sugiyama A."/>
            <person name="Takemoto M."/>
            <person name="Kawakami B."/>
            <person name="Yamazaki M."/>
            <person name="Watanabe K."/>
            <person name="Kumagai A."/>
            <person name="Itakura S."/>
            <person name="Fukuzumi Y."/>
            <person name="Fujimori Y."/>
            <person name="Komiyama M."/>
            <person name="Tashiro H."/>
            <person name="Tanigami A."/>
            <person name="Fujiwara T."/>
            <person name="Ono T."/>
            <person name="Yamada K."/>
            <person name="Fujii Y."/>
            <person name="Ozaki K."/>
            <person name="Hirao M."/>
            <person name="Ohmori Y."/>
            <person name="Kawabata A."/>
            <person name="Hikiji T."/>
            <person name="Kobatake N."/>
            <person name="Inagaki H."/>
            <person name="Ikema Y."/>
            <person name="Okamoto S."/>
            <person name="Okitani R."/>
            <person name="Kawakami T."/>
            <person name="Noguchi S."/>
            <person name="Itoh T."/>
            <person name="Shigeta K."/>
            <person name="Senba T."/>
            <person name="Matsumura K."/>
            <person name="Nakajima Y."/>
            <person name="Mizuno T."/>
            <person name="Morinaga M."/>
            <person name="Sasaki M."/>
            <person name="Togashi T."/>
            <person name="Oyama M."/>
            <person name="Hata H."/>
            <person name="Watanabe M."/>
            <person name="Komatsu T."/>
            <person name="Mizushima-Sugano J."/>
            <person name="Satoh T."/>
            <person name="Shirai Y."/>
            <person name="Takahashi Y."/>
            <person name="Nakagawa K."/>
            <person name="Okumura K."/>
            <person name="Nagase T."/>
            <person name="Nomura N."/>
            <person name="Kikuchi H."/>
            <person name="Masuho Y."/>
            <person name="Yamashita R."/>
            <person name="Nakai K."/>
            <person name="Yada T."/>
            <person name="Nakamura Y."/>
            <person name="Ohara O."/>
            <person name="Isogai T."/>
            <person name="Sugano S."/>
        </authorList>
    </citation>
    <scope>NUCLEOTIDE SEQUENCE [LARGE SCALE MRNA] (ISOFORM 1)</scope>
    <source>
        <tissue>Testis</tissue>
    </source>
</reference>
<reference key="5">
    <citation type="submission" date="2005-09" db="EMBL/GenBank/DDBJ databases">
        <authorList>
            <person name="Mural R.J."/>
            <person name="Istrail S."/>
            <person name="Sutton G.G."/>
            <person name="Florea L."/>
            <person name="Halpern A.L."/>
            <person name="Mobarry C.M."/>
            <person name="Lippert R."/>
            <person name="Walenz B."/>
            <person name="Shatkay H."/>
            <person name="Dew I."/>
            <person name="Miller J.R."/>
            <person name="Flanigan M.J."/>
            <person name="Edwards N.J."/>
            <person name="Bolanos R."/>
            <person name="Fasulo D."/>
            <person name="Halldorsson B.V."/>
            <person name="Hannenhalli S."/>
            <person name="Turner R."/>
            <person name="Yooseph S."/>
            <person name="Lu F."/>
            <person name="Nusskern D.R."/>
            <person name="Shue B.C."/>
            <person name="Zheng X.H."/>
            <person name="Zhong F."/>
            <person name="Delcher A.L."/>
            <person name="Huson D.H."/>
            <person name="Kravitz S.A."/>
            <person name="Mouchard L."/>
            <person name="Reinert K."/>
            <person name="Remington K.A."/>
            <person name="Clark A.G."/>
            <person name="Waterman M.S."/>
            <person name="Eichler E.E."/>
            <person name="Adams M.D."/>
            <person name="Hunkapiller M.W."/>
            <person name="Myers E.W."/>
            <person name="Venter J.C."/>
        </authorList>
    </citation>
    <scope>NUCLEOTIDE SEQUENCE [LARGE SCALE GENOMIC DNA]</scope>
</reference>
<reference key="6">
    <citation type="journal article" date="2004" name="Genome Res.">
        <title>The status, quality, and expansion of the NIH full-length cDNA project: the Mammalian Gene Collection (MGC).</title>
        <authorList>
            <consortium name="The MGC Project Team"/>
        </authorList>
    </citation>
    <scope>NUCLEOTIDE SEQUENCE [LARGE SCALE MRNA] (ISOFORMS 2; 3 AND 4)</scope>
    <source>
        <tissue>Brain</tissue>
        <tissue>Lung</tissue>
        <tissue>Muscle</tissue>
        <tissue>Ovary</tissue>
    </source>
</reference>
<reference key="7">
    <citation type="submission" date="1996-03" db="EMBL/GenBank/DDBJ databases">
        <title>Interaction of sina and siah ring finger proteins with proteins involved in RNA metabolism, detected using the yeast two hybrid system.</title>
        <authorList>
            <person name="Hu Y."/>
            <person name="Holloway A.J."/>
            <person name="Bowtell D.D.L."/>
        </authorList>
    </citation>
    <scope>NUCLEOTIDE SEQUENCE [MRNA] OF 2-559 (ISOFORM 2)</scope>
</reference>
<reference key="8">
    <citation type="journal article" date="1999" name="RNA">
        <title>PUF60: a novel U2AF65-related splicing activity.</title>
        <authorList>
            <person name="Page-McCaw P.S."/>
            <person name="Amonlirdviman K."/>
            <person name="Sharp P.A."/>
        </authorList>
    </citation>
    <scope>NUCLEOTIDE SEQUENCE [MRNA] OF 4-559 (ISOFORM 1)</scope>
    <scope>PROTEIN SEQUENCE OF 32-43; 53-69; 72-80; 156-167; 169-185; 227-243; 267-296; 301-313; 332-342; 419-437 AND 527-559</scope>
    <scope>FUNCTION</scope>
    <scope>SUBUNIT</scope>
    <scope>RNA-BINDING</scope>
    <scope>INTERACTION WITH SRSF11</scope>
    <scope>SUBCELLULAR LOCATION</scope>
</reference>
<reference key="9">
    <citation type="journal article" date="2001" name="Cell">
        <title>Defective interplay of activators and repressors with TFIH in xeroderma pigmentosum.</title>
        <authorList>
            <person name="Liu J."/>
            <person name="Akoulitchev S."/>
            <person name="Weber A."/>
            <person name="Ge H."/>
            <person name="Chuikov S."/>
            <person name="Libutti D."/>
            <person name="Wang X.W."/>
            <person name="Conaway J.W."/>
            <person name="Harris C.C."/>
            <person name="Conaway R.C."/>
            <person name="Reinberg D."/>
            <person name="Levens D."/>
        </authorList>
    </citation>
    <scope>FUNCTION</scope>
    <scope>INTERACTION WITH ERCC3</scope>
</reference>
<reference key="10">
    <citation type="journal article" date="2006" name="Cancer Res.">
        <title>An essential role of alternative splicing of c-myc suppressor FUSE-binding protein-interacting repressor in carcinogenesis.</title>
        <authorList>
            <person name="Matsushita K."/>
            <person name="Tomonaga T."/>
            <person name="Shimada H."/>
            <person name="Shioya A."/>
            <person name="Higashi M."/>
            <person name="Matsubara H."/>
            <person name="Harigaya K."/>
            <person name="Nomura F."/>
            <person name="Libutti D."/>
            <person name="Levens D."/>
            <person name="Ochiai T."/>
        </authorList>
    </citation>
    <scope>FUNCTION</scope>
    <scope>ALTERNATIVE SPLICING (ISOFORM 6)</scope>
    <scope>TISSUE SPECIFICITY</scope>
</reference>
<reference key="11">
    <citation type="journal article" date="2006" name="EMBO J.">
        <title>The FUSE/FBP/FIR/TFIIH system is a molecular machine programming a pulse of c-myc expression.</title>
        <authorList>
            <person name="Liu J."/>
            <person name="Kouzine F."/>
            <person name="Nie Z."/>
            <person name="Chung H.-J."/>
            <person name="Elisha-Feil Z."/>
            <person name="Weber A."/>
            <person name="Zhao K."/>
            <person name="Levens D."/>
        </authorList>
    </citation>
    <scope>FUNCTION</scope>
    <scope>DNA-BINDING</scope>
</reference>
<reference key="12">
    <citation type="journal article" date="2006" name="Nat. Biotechnol.">
        <title>A probability-based approach for high-throughput protein phosphorylation analysis and site localization.</title>
        <authorList>
            <person name="Beausoleil S.A."/>
            <person name="Villen J."/>
            <person name="Gerber S.A."/>
            <person name="Rush J."/>
            <person name="Gygi S.P."/>
        </authorList>
    </citation>
    <scope>PHOSPHORYLATION [LARGE SCALE ANALYSIS] AT THR-60</scope>
    <scope>IDENTIFICATION BY MASS SPECTROMETRY [LARGE SCALE ANALYSIS]</scope>
    <source>
        <tissue>Cervix carcinoma</tissue>
    </source>
</reference>
<reference key="13">
    <citation type="journal article" date="2007" name="PLoS ONE">
        <title>Control of pre-mRNA splicing by the general splicing factors PUF60 and U2AF.</title>
        <authorList>
            <person name="Hastings M.L."/>
            <person name="Allemand E."/>
            <person name="Duelli D.M."/>
            <person name="Myers M.P."/>
            <person name="Krainer A.R."/>
        </authorList>
    </citation>
    <scope>FUNCTION</scope>
    <scope>IDENTIFICATION IN THE SPLICEOSOME COMPLEX</scope>
    <scope>IDENTIFICATION BY MASS SPECTROMETRY</scope>
    <scope>RNA-BINDING</scope>
    <scope>SUBCELLULAR LOCATION</scope>
</reference>
<reference key="14">
    <citation type="journal article" date="2008" name="Proc. Natl. Acad. Sci. U.S.A.">
        <title>A quantitative atlas of mitotic phosphorylation.</title>
        <authorList>
            <person name="Dephoure N."/>
            <person name="Zhou C."/>
            <person name="Villen J."/>
            <person name="Beausoleil S.A."/>
            <person name="Bakalarski C.E."/>
            <person name="Elledge S.J."/>
            <person name="Gygi S.P."/>
        </authorList>
    </citation>
    <scope>IDENTIFICATION BY MASS SPECTROMETRY [LARGE SCALE ANALYSIS]</scope>
    <source>
        <tissue>Cervix carcinoma</tissue>
    </source>
</reference>
<reference key="15">
    <citation type="journal article" date="2009" name="Anal. Chem.">
        <title>Lys-N and trypsin cover complementary parts of the phosphoproteome in a refined SCX-based approach.</title>
        <authorList>
            <person name="Gauci S."/>
            <person name="Helbig A.O."/>
            <person name="Slijper M."/>
            <person name="Krijgsveld J."/>
            <person name="Heck A.J."/>
            <person name="Mohammed S."/>
        </authorList>
    </citation>
    <scope>IDENTIFICATION BY MASS SPECTROMETRY [LARGE SCALE ANALYSIS]</scope>
</reference>
<reference key="16">
    <citation type="journal article" date="2009" name="Science">
        <title>Lysine acetylation targets protein complexes and co-regulates major cellular functions.</title>
        <authorList>
            <person name="Choudhary C."/>
            <person name="Kumar C."/>
            <person name="Gnad F."/>
            <person name="Nielsen M.L."/>
            <person name="Rehman M."/>
            <person name="Walther T.C."/>
            <person name="Olsen J.V."/>
            <person name="Mann M."/>
        </authorList>
    </citation>
    <scope>ACETYLATION [LARGE SCALE ANALYSIS] AT LYS-251 AND LYS-454</scope>
    <scope>IDENTIFICATION BY MASS SPECTROMETRY [LARGE SCALE ANALYSIS]</scope>
</reference>
<reference key="17">
    <citation type="journal article" date="2010" name="Sci. Signal.">
        <title>Quantitative phosphoproteomics reveals widespread full phosphorylation site occupancy during mitosis.</title>
        <authorList>
            <person name="Olsen J.V."/>
            <person name="Vermeulen M."/>
            <person name="Santamaria A."/>
            <person name="Kumar C."/>
            <person name="Miller M.L."/>
            <person name="Jensen L.J."/>
            <person name="Gnad F."/>
            <person name="Cox J."/>
            <person name="Jensen T.S."/>
            <person name="Nigg E.A."/>
            <person name="Brunak S."/>
            <person name="Mann M."/>
        </authorList>
    </citation>
    <scope>PHOSPHORYLATION [LARGE SCALE ANALYSIS] AT THR-60; SER-112 AND THR-314</scope>
    <scope>IDENTIFICATION BY MASS SPECTROMETRY [LARGE SCALE ANALYSIS]</scope>
    <source>
        <tissue>Cervix carcinoma</tissue>
    </source>
</reference>
<reference key="18">
    <citation type="journal article" date="2011" name="BMC Syst. Biol.">
        <title>Initial characterization of the human central proteome.</title>
        <authorList>
            <person name="Burkard T.R."/>
            <person name="Planyavsky M."/>
            <person name="Kaupe I."/>
            <person name="Breitwieser F.P."/>
            <person name="Buerckstuemmer T."/>
            <person name="Bennett K.L."/>
            <person name="Superti-Furga G."/>
            <person name="Colinge J."/>
        </authorList>
    </citation>
    <scope>IDENTIFICATION BY MASS SPECTROMETRY [LARGE SCALE ANALYSIS]</scope>
</reference>
<reference key="19">
    <citation type="journal article" date="2013" name="J. Proteome Res.">
        <title>Toward a comprehensive characterization of a human cancer cell phosphoproteome.</title>
        <authorList>
            <person name="Zhou H."/>
            <person name="Di Palma S."/>
            <person name="Preisinger C."/>
            <person name="Peng M."/>
            <person name="Polat A.N."/>
            <person name="Heck A.J."/>
            <person name="Mohammed S."/>
        </authorList>
    </citation>
    <scope>PHOSPHORYLATION [LARGE SCALE ANALYSIS] AT THR-60</scope>
    <scope>IDENTIFICATION BY MASS SPECTROMETRY [LARGE SCALE ANALYSIS]</scope>
    <source>
        <tissue>Erythroleukemia</tissue>
    </source>
</reference>
<reference key="20">
    <citation type="journal article" date="2014" name="J. Proteomics">
        <title>An enzyme assisted RP-RPLC approach for in-depth analysis of human liver phosphoproteome.</title>
        <authorList>
            <person name="Bian Y."/>
            <person name="Song C."/>
            <person name="Cheng K."/>
            <person name="Dong M."/>
            <person name="Wang F."/>
            <person name="Huang J."/>
            <person name="Sun D."/>
            <person name="Wang L."/>
            <person name="Ye M."/>
            <person name="Zou H."/>
        </authorList>
    </citation>
    <scope>IDENTIFICATION BY MASS SPECTROMETRY [LARGE SCALE ANALYSIS]</scope>
    <source>
        <tissue>Liver</tissue>
    </source>
</reference>
<reference key="21">
    <citation type="journal article" date="2014" name="Nat. Struct. Mol. Biol.">
        <title>Uncovering global SUMOylation signaling networks in a site-specific manner.</title>
        <authorList>
            <person name="Hendriks I.A."/>
            <person name="D'Souza R.C."/>
            <person name="Yang B."/>
            <person name="Verlaan-de Vries M."/>
            <person name="Mann M."/>
            <person name="Vertegaal A.C."/>
        </authorList>
    </citation>
    <scope>SUMOYLATION [LARGE SCALE ANALYSIS] AT LYS-458</scope>
    <scope>SUMOYLATION [LARGE SCALE ANALYSIS] AT LYS-14 (ISOFORMS 5 AND 6)</scope>
    <scope>IDENTIFICATION BY MASS SPECTROMETRY [LARGE SCALE ANALYSIS]</scope>
</reference>
<reference key="22">
    <citation type="journal article" date="2017" name="Nat. Struct. Mol. Biol.">
        <title>Site-specific mapping of the human SUMO proteome reveals co-modification with phosphorylation.</title>
        <authorList>
            <person name="Hendriks I.A."/>
            <person name="Lyon D."/>
            <person name="Young C."/>
            <person name="Jensen L.J."/>
            <person name="Vertegaal A.C."/>
            <person name="Nielsen M.L."/>
        </authorList>
    </citation>
    <scope>SUMOYLATION [LARGE SCALE ANALYSIS] AT LYS-43; LYS-80; LYS-419 AND LYS-458</scope>
    <scope>SUMOYLATION [LARGE SCALE ANALYSIS] AT LYS-14 (ISOFORMS 5 AND 6)</scope>
    <scope>IDENTIFICATION BY MASS SPECTROMETRY [LARGE SCALE ANALYSIS]</scope>
</reference>
<reference key="23">
    <citation type="journal article" date="2019" name="Nucleic Acids Res.">
        <title>ARGLU1 is a transcriptional coactivator and splicing regulator important for stress hormone signaling and development.</title>
        <authorList>
            <person name="Magomedova L."/>
            <person name="Tiefenbach J."/>
            <person name="Zilberman E."/>
            <person name="Le Billan F."/>
            <person name="Voisin V."/>
            <person name="Saikali M."/>
            <person name="Boivin V."/>
            <person name="Robitaille M."/>
            <person name="Gueroussov S."/>
            <person name="Irimia M."/>
            <person name="Ray D."/>
            <person name="Patel R."/>
            <person name="Xu C."/>
            <person name="Jeyasuria P."/>
            <person name="Bader G.D."/>
            <person name="Hughes T.R."/>
            <person name="Morris Q.D."/>
            <person name="Scott M.S."/>
            <person name="Krause H."/>
            <person name="Angers S."/>
            <person name="Blencowe B.J."/>
            <person name="Cummins C.L."/>
        </authorList>
    </citation>
    <scope>INTERACTION WITH ARGLU1</scope>
</reference>
<reference key="24">
    <citation type="submission" date="2007-04" db="PDB data bank">
        <title>Solution structure of the third RNA binding domain of FBP-interacting repressor, SIAHBP1.</title>
        <authorList>
            <consortium name="RIKEN structural genomics initiative (RSGI)"/>
        </authorList>
    </citation>
    <scope>STRUCTURE BY NMR OF 454-559</scope>
</reference>
<reference key="25">
    <citation type="journal article" date="2013" name="Am. J. Hum. Genet.">
        <title>SCRIB and PUF60 are primary drivers of the multisystemic phenotypes of the 8q24.3 copy-number variant.</title>
        <authorList>
            <person name="Dauber A."/>
            <person name="Golzio C."/>
            <person name="Guenot C."/>
            <person name="Jodelka F.M."/>
            <person name="Kibaek M."/>
            <person name="Kjaergaard S."/>
            <person name="Leheup B."/>
            <person name="Martinet D."/>
            <person name="Nowaczyk M.J."/>
            <person name="Rosenfeld J.A."/>
            <person name="Zeesman S."/>
            <person name="Zunich J."/>
            <person name="Beckmann J.S."/>
            <person name="Hirschhorn J.N."/>
            <person name="Hastings M.L."/>
            <person name="Jacquemont S."/>
            <person name="Katsanis N."/>
        </authorList>
    </citation>
    <scope>VARIANT VRJS TYR-169</scope>
    <scope>CHARACTERIZATION OF VARIANT VRJS TYR-169</scope>
</reference>
<organism>
    <name type="scientific">Homo sapiens</name>
    <name type="common">Human</name>
    <dbReference type="NCBI Taxonomy" id="9606"/>
    <lineage>
        <taxon>Eukaryota</taxon>
        <taxon>Metazoa</taxon>
        <taxon>Chordata</taxon>
        <taxon>Craniata</taxon>
        <taxon>Vertebrata</taxon>
        <taxon>Euteleostomi</taxon>
        <taxon>Mammalia</taxon>
        <taxon>Eutheria</taxon>
        <taxon>Euarchontoglires</taxon>
        <taxon>Primates</taxon>
        <taxon>Haplorrhini</taxon>
        <taxon>Catarrhini</taxon>
        <taxon>Hominidae</taxon>
        <taxon>Homo</taxon>
    </lineage>
</organism>
<proteinExistence type="evidence at protein level"/>
<gene>
    <name evidence="21" type="primary">PUF60</name>
    <name evidence="17" type="synonym">FIR</name>
    <name evidence="13" type="synonym">ROBPI</name>
    <name evidence="18" type="synonym">SIAHBP1</name>
</gene>
<evidence type="ECO:0000250" key="1">
    <source>
        <dbReference type="UniProtKB" id="Q3UEB3"/>
    </source>
</evidence>
<evidence type="ECO:0000255" key="2">
    <source>
        <dbReference type="PROSITE-ProRule" id="PRU00176"/>
    </source>
</evidence>
<evidence type="ECO:0000256" key="3">
    <source>
        <dbReference type="SAM" id="MobiDB-lite"/>
    </source>
</evidence>
<evidence type="ECO:0000269" key="4">
    <source>
    </source>
</evidence>
<evidence type="ECO:0000269" key="5">
    <source>
    </source>
</evidence>
<evidence type="ECO:0000269" key="6">
    <source>
    </source>
</evidence>
<evidence type="ECO:0000269" key="7">
    <source>
    </source>
</evidence>
<evidence type="ECO:0000269" key="8">
    <source>
    </source>
</evidence>
<evidence type="ECO:0000269" key="9">
    <source>
    </source>
</evidence>
<evidence type="ECO:0000269" key="10">
    <source>
    </source>
</evidence>
<evidence type="ECO:0000269" key="11">
    <source>
    </source>
</evidence>
<evidence type="ECO:0000269" key="12">
    <source>
    </source>
</evidence>
<evidence type="ECO:0000303" key="13">
    <source>
    </source>
</evidence>
<evidence type="ECO:0000303" key="14">
    <source>
    </source>
</evidence>
<evidence type="ECO:0000303" key="15">
    <source>
    </source>
</evidence>
<evidence type="ECO:0000303" key="16">
    <source>
    </source>
</evidence>
<evidence type="ECO:0000303" key="17">
    <source>
    </source>
</evidence>
<evidence type="ECO:0000303" key="18">
    <source ref="24"/>
</evidence>
<evidence type="ECO:0000303" key="19">
    <source ref="7"/>
</evidence>
<evidence type="ECO:0000305" key="20"/>
<evidence type="ECO:0000312" key="21">
    <source>
        <dbReference type="HGNC" id="HGNC:17042"/>
    </source>
</evidence>
<evidence type="ECO:0007744" key="22">
    <source>
    </source>
</evidence>
<evidence type="ECO:0007744" key="23">
    <source>
    </source>
</evidence>
<evidence type="ECO:0007744" key="24">
    <source>
    </source>
</evidence>
<evidence type="ECO:0007744" key="25">
    <source>
    </source>
</evidence>
<evidence type="ECO:0007744" key="26">
    <source>
    </source>
</evidence>
<evidence type="ECO:0007744" key="27">
    <source>
    </source>
</evidence>
<evidence type="ECO:0007829" key="28">
    <source>
        <dbReference type="PDB" id="2DNY"/>
    </source>
</evidence>
<evidence type="ECO:0007829" key="29">
    <source>
        <dbReference type="PDB" id="2KXH"/>
    </source>
</evidence>
<evidence type="ECO:0007829" key="30">
    <source>
        <dbReference type="PDB" id="2QFJ"/>
    </source>
</evidence>
<evidence type="ECO:0007829" key="31">
    <source>
        <dbReference type="PDB" id="3DXB"/>
    </source>
</evidence>
<evidence type="ECO:0007829" key="32">
    <source>
        <dbReference type="PDB" id="3UE2"/>
    </source>
</evidence>
<evidence type="ECO:0007829" key="33">
    <source>
        <dbReference type="PDB" id="3UWT"/>
    </source>
</evidence>
<evidence type="ECO:0007829" key="34">
    <source>
        <dbReference type="PDB" id="7Z3X"/>
    </source>
</evidence>
<dbReference type="EMBL" id="AF217197">
    <property type="protein sequence ID" value="AAF27522.2"/>
    <property type="molecule type" value="mRNA"/>
</dbReference>
<dbReference type="EMBL" id="AF114818">
    <property type="protein sequence ID" value="AAF23589.1"/>
    <property type="molecule type" value="mRNA"/>
</dbReference>
<dbReference type="EMBL" id="AK292373">
    <property type="protein sequence ID" value="BAF85062.1"/>
    <property type="molecule type" value="mRNA"/>
</dbReference>
<dbReference type="EMBL" id="CR457143">
    <property type="protein sequence ID" value="CAG33424.1"/>
    <property type="molecule type" value="mRNA"/>
</dbReference>
<dbReference type="EMBL" id="CH471162">
    <property type="protein sequence ID" value="EAW82187.1"/>
    <property type="molecule type" value="Genomic_DNA"/>
</dbReference>
<dbReference type="EMBL" id="CH471162">
    <property type="protein sequence ID" value="EAW82189.1"/>
    <property type="molecule type" value="Genomic_DNA"/>
</dbReference>
<dbReference type="EMBL" id="BC008875">
    <property type="protein sequence ID" value="AAH08875.1"/>
    <property type="molecule type" value="mRNA"/>
</dbReference>
<dbReference type="EMBL" id="BC009734">
    <property type="protein sequence ID" value="AAH09734.1"/>
    <property type="molecule type" value="mRNA"/>
</dbReference>
<dbReference type="EMBL" id="BC011265">
    <property type="protein sequence ID" value="AAH11265.1"/>
    <property type="molecule type" value="mRNA"/>
</dbReference>
<dbReference type="EMBL" id="BC011979">
    <property type="protein sequence ID" value="AAH11979.1"/>
    <property type="molecule type" value="mRNA"/>
</dbReference>
<dbReference type="EMBL" id="U51586">
    <property type="protein sequence ID" value="AAB41656.1"/>
    <property type="molecule type" value="mRNA"/>
</dbReference>
<dbReference type="EMBL" id="AF190744">
    <property type="protein sequence ID" value="AAF05605.1"/>
    <property type="molecule type" value="mRNA"/>
</dbReference>
<dbReference type="CCDS" id="CCDS47933.1">
    <molecule id="Q9UHX1-2"/>
</dbReference>
<dbReference type="CCDS" id="CCDS47934.1">
    <molecule id="Q9UHX1-1"/>
</dbReference>
<dbReference type="CCDS" id="CCDS47935.1">
    <molecule id="Q9UHX1-3"/>
</dbReference>
<dbReference type="CCDS" id="CCDS59514.1">
    <molecule id="Q9UHX1-4"/>
</dbReference>
<dbReference type="CCDS" id="CCDS59515.1">
    <molecule id="Q9UHX1-6"/>
</dbReference>
<dbReference type="CCDS" id="CCDS59516.1">
    <molecule id="Q9UHX1-5"/>
</dbReference>
<dbReference type="RefSeq" id="NP_001129505.1">
    <molecule id="Q9UHX1-3"/>
    <property type="nucleotide sequence ID" value="NM_001136033.3"/>
</dbReference>
<dbReference type="RefSeq" id="NP_001258025.1">
    <property type="nucleotide sequence ID" value="NM_001271096.1"/>
</dbReference>
<dbReference type="RefSeq" id="NP_001258026.1">
    <molecule id="Q9UHX1-6"/>
    <property type="nucleotide sequence ID" value="NM_001271097.2"/>
</dbReference>
<dbReference type="RefSeq" id="NP_001258027.1">
    <property type="nucleotide sequence ID" value="NM_001271098.1"/>
</dbReference>
<dbReference type="RefSeq" id="NP_001258028.1">
    <molecule id="Q9UHX1-5"/>
    <property type="nucleotide sequence ID" value="NM_001271099.2"/>
</dbReference>
<dbReference type="RefSeq" id="NP_001258029.1">
    <molecule id="Q9UHX1-4"/>
    <property type="nucleotide sequence ID" value="NM_001271100.2"/>
</dbReference>
<dbReference type="RefSeq" id="NP_055096.2">
    <molecule id="Q9UHX1-2"/>
    <property type="nucleotide sequence ID" value="NM_014281.4"/>
</dbReference>
<dbReference type="RefSeq" id="NP_510965.1">
    <molecule id="Q9UHX1-1"/>
    <property type="nucleotide sequence ID" value="NM_078480.3"/>
</dbReference>
<dbReference type="RefSeq" id="XP_016868728.1">
    <property type="nucleotide sequence ID" value="XM_017013239.1"/>
</dbReference>
<dbReference type="RefSeq" id="XP_016868729.1">
    <property type="nucleotide sequence ID" value="XM_017013240.1"/>
</dbReference>
<dbReference type="PDB" id="2DNY">
    <property type="method" value="NMR"/>
    <property type="chains" value="A=454-559"/>
</dbReference>
<dbReference type="PDB" id="2KXF">
    <property type="method" value="NMR"/>
    <property type="chains" value="A=119-314"/>
</dbReference>
<dbReference type="PDB" id="2KXH">
    <property type="method" value="NMR"/>
    <property type="chains" value="A=119-314"/>
</dbReference>
<dbReference type="PDB" id="2QFJ">
    <property type="method" value="X-ray"/>
    <property type="resolution" value="2.10 A"/>
    <property type="chains" value="A/B=118-316"/>
</dbReference>
<dbReference type="PDB" id="3DXB">
    <property type="method" value="X-ray"/>
    <property type="resolution" value="2.20 A"/>
    <property type="chains" value="A/B/C/D/E/F/G/H=460-559"/>
</dbReference>
<dbReference type="PDB" id="3UE2">
    <property type="method" value="X-ray"/>
    <property type="resolution" value="1.23 A"/>
    <property type="chains" value="A=443-559"/>
</dbReference>
<dbReference type="PDB" id="3US5">
    <property type="method" value="X-ray"/>
    <property type="resolution" value="1.38 A"/>
    <property type="chains" value="A=443-559"/>
</dbReference>
<dbReference type="PDB" id="3UWT">
    <property type="method" value="X-ray"/>
    <property type="resolution" value="2.50 A"/>
    <property type="chains" value="A=118-316"/>
</dbReference>
<dbReference type="PDB" id="5KVY">
    <property type="method" value="X-ray"/>
    <property type="resolution" value="1.95 A"/>
    <property type="chains" value="A/B=118-316"/>
</dbReference>
<dbReference type="PDB" id="5KW1">
    <property type="method" value="X-ray"/>
    <property type="resolution" value="2.10 A"/>
    <property type="chains" value="A/B=118-316"/>
</dbReference>
<dbReference type="PDB" id="5KW6">
    <property type="method" value="X-ray"/>
    <property type="resolution" value="1.91 A"/>
    <property type="chains" value="A/B=118-316"/>
</dbReference>
<dbReference type="PDB" id="5KWQ">
    <property type="method" value="X-ray"/>
    <property type="resolution" value="2.80 A"/>
    <property type="chains" value="A/B=118-316"/>
</dbReference>
<dbReference type="PDB" id="6LUR">
    <property type="method" value="X-ray"/>
    <property type="resolution" value="2.00 A"/>
    <property type="chains" value="A/B/C/D/E/F/G/H=460-559"/>
</dbReference>
<dbReference type="PDB" id="6SLO">
    <property type="method" value="X-ray"/>
    <property type="resolution" value="1.94 A"/>
    <property type="chains" value="A/B/C/D=460-559"/>
</dbReference>
<dbReference type="PDB" id="7Q8A">
    <property type="method" value="X-ray"/>
    <property type="resolution" value="2.05 A"/>
    <property type="chains" value="A/B=114-310"/>
</dbReference>
<dbReference type="PDB" id="7Z3X">
    <property type="method" value="X-ray"/>
    <property type="resolution" value="1.65 A"/>
    <property type="chains" value="A/B=114-308"/>
</dbReference>
<dbReference type="PDBsum" id="2DNY"/>
<dbReference type="PDBsum" id="2KXF"/>
<dbReference type="PDBsum" id="2KXH"/>
<dbReference type="PDBsum" id="2QFJ"/>
<dbReference type="PDBsum" id="3DXB"/>
<dbReference type="PDBsum" id="3UE2"/>
<dbReference type="PDBsum" id="3US5"/>
<dbReference type="PDBsum" id="3UWT"/>
<dbReference type="PDBsum" id="5KVY"/>
<dbReference type="PDBsum" id="5KW1"/>
<dbReference type="PDBsum" id="5KW6"/>
<dbReference type="PDBsum" id="5KWQ"/>
<dbReference type="PDBsum" id="6LUR"/>
<dbReference type="PDBsum" id="6SLO"/>
<dbReference type="PDBsum" id="7Q8A"/>
<dbReference type="PDBsum" id="7Z3X"/>
<dbReference type="BMRB" id="Q9UHX1"/>
<dbReference type="SMR" id="Q9UHX1"/>
<dbReference type="BioGRID" id="116502">
    <property type="interactions" value="388"/>
</dbReference>
<dbReference type="CORUM" id="Q9UHX1"/>
<dbReference type="DIP" id="DIP-34636N"/>
<dbReference type="ELM" id="Q9UHX1"/>
<dbReference type="FunCoup" id="Q9UHX1">
    <property type="interactions" value="2915"/>
</dbReference>
<dbReference type="IntAct" id="Q9UHX1">
    <property type="interactions" value="128"/>
</dbReference>
<dbReference type="MINT" id="Q9UHX1"/>
<dbReference type="STRING" id="9606.ENSP00000434359"/>
<dbReference type="GlyGen" id="Q9UHX1">
    <property type="glycosylation" value="3 sites, 1 O-linked glycan (1 site)"/>
</dbReference>
<dbReference type="iPTMnet" id="Q9UHX1"/>
<dbReference type="MetOSite" id="Q9UHX1"/>
<dbReference type="PhosphoSitePlus" id="Q9UHX1"/>
<dbReference type="SwissPalm" id="Q9UHX1"/>
<dbReference type="BioMuta" id="PUF60"/>
<dbReference type="DMDM" id="74761960"/>
<dbReference type="jPOST" id="Q9UHX1"/>
<dbReference type="MassIVE" id="Q9UHX1"/>
<dbReference type="PaxDb" id="9606-ENSP00000434359"/>
<dbReference type="PeptideAtlas" id="Q9UHX1"/>
<dbReference type="ProteomicsDB" id="84428">
    <molecule id="Q9UHX1-1"/>
</dbReference>
<dbReference type="ProteomicsDB" id="84429">
    <molecule id="Q9UHX1-2"/>
</dbReference>
<dbReference type="ProteomicsDB" id="84430">
    <molecule id="Q9UHX1-3"/>
</dbReference>
<dbReference type="ProteomicsDB" id="84431">
    <molecule id="Q9UHX1-4"/>
</dbReference>
<dbReference type="ProteomicsDB" id="84432">
    <molecule id="Q9UHX1-5"/>
</dbReference>
<dbReference type="ProteomicsDB" id="84433">
    <molecule id="Q9UHX1-6"/>
</dbReference>
<dbReference type="Pumba" id="Q9UHX1"/>
<dbReference type="TopDownProteomics" id="Q9UHX1-3">
    <molecule id="Q9UHX1-3"/>
</dbReference>
<dbReference type="Antibodypedia" id="28098">
    <property type="antibodies" value="436 antibodies from 34 providers"/>
</dbReference>
<dbReference type="DNASU" id="22827"/>
<dbReference type="Ensembl" id="ENST00000313352.11">
    <molecule id="Q9UHX1-4"/>
    <property type="protein sequence ID" value="ENSP00000322016.7"/>
    <property type="gene ID" value="ENSG00000179950.15"/>
</dbReference>
<dbReference type="Ensembl" id="ENST00000349157.10">
    <molecule id="Q9UHX1-2"/>
    <property type="protein sequence ID" value="ENSP00000322036.7"/>
    <property type="gene ID" value="ENSG00000179950.15"/>
</dbReference>
<dbReference type="Ensembl" id="ENST00000453551.6">
    <molecule id="Q9UHX1-3"/>
    <property type="protein sequence ID" value="ENSP00000402953.2"/>
    <property type="gene ID" value="ENSG00000179950.15"/>
</dbReference>
<dbReference type="Ensembl" id="ENST00000456095.6">
    <molecule id="Q9UHX1-5"/>
    <property type="protein sequence ID" value="ENSP00000395417.2"/>
    <property type="gene ID" value="ENSG00000179950.15"/>
</dbReference>
<dbReference type="Ensembl" id="ENST00000526683.6">
    <molecule id="Q9UHX1-1"/>
    <property type="protein sequence ID" value="ENSP00000434359.1"/>
    <property type="gene ID" value="ENSG00000179950.15"/>
</dbReference>
<dbReference type="Ensembl" id="ENST00000527197.5">
    <molecule id="Q9UHX1-6"/>
    <property type="protein sequence ID" value="ENSP00000431960.1"/>
    <property type="gene ID" value="ENSG00000179950.15"/>
</dbReference>
<dbReference type="Ensembl" id="ENST00000531951.6">
    <molecule id="Q9UHX1-3"/>
    <property type="protein sequence ID" value="ENSP00000515500.1"/>
    <property type="gene ID" value="ENSG00000179950.15"/>
</dbReference>
<dbReference type="Ensembl" id="ENST00000703846.1">
    <molecule id="Q9UHX1-3"/>
    <property type="protein sequence ID" value="ENSP00000515498.1"/>
    <property type="gene ID" value="ENSG00000179950.15"/>
</dbReference>
<dbReference type="Ensembl" id="ENST00000703849.1">
    <molecule id="Q9UHX1-3"/>
    <property type="protein sequence ID" value="ENSP00000515501.1"/>
    <property type="gene ID" value="ENSG00000179950.15"/>
</dbReference>
<dbReference type="Ensembl" id="ENST00000703866.1">
    <molecule id="Q9UHX1-1"/>
    <property type="protein sequence ID" value="ENSP00000515511.1"/>
    <property type="gene ID" value="ENSG00000179950.15"/>
</dbReference>
<dbReference type="GeneID" id="22827"/>
<dbReference type="KEGG" id="hsa:22827"/>
<dbReference type="MANE-Select" id="ENST00000526683.6">
    <property type="protein sequence ID" value="ENSP00000434359.1"/>
    <property type="RefSeq nucleotide sequence ID" value="NM_078480.3"/>
    <property type="RefSeq protein sequence ID" value="NP_510965.1"/>
</dbReference>
<dbReference type="UCSC" id="uc003yzq.5">
    <molecule id="Q9UHX1-1"/>
    <property type="organism name" value="human"/>
</dbReference>
<dbReference type="AGR" id="HGNC:17042"/>
<dbReference type="CTD" id="22827"/>
<dbReference type="DisGeNET" id="22827"/>
<dbReference type="GeneCards" id="PUF60"/>
<dbReference type="HGNC" id="HGNC:17042">
    <property type="gene designation" value="PUF60"/>
</dbReference>
<dbReference type="HPA" id="ENSG00000179950">
    <property type="expression patterns" value="Low tissue specificity"/>
</dbReference>
<dbReference type="MalaCards" id="PUF60"/>
<dbReference type="MIM" id="604819">
    <property type="type" value="gene"/>
</dbReference>
<dbReference type="MIM" id="615583">
    <property type="type" value="phenotype"/>
</dbReference>
<dbReference type="neXtProt" id="NX_Q9UHX1"/>
<dbReference type="OpenTargets" id="ENSG00000179950"/>
<dbReference type="Orphanet" id="508488">
    <property type="disease" value="8q24.3 microdeletion syndrome"/>
</dbReference>
<dbReference type="Orphanet" id="508498">
    <property type="disease" value="Intellectual disability-cardiac anomalies-short stature-joint laxity syndrome"/>
</dbReference>
<dbReference type="PharmGKB" id="PA162400364"/>
<dbReference type="VEuPathDB" id="HostDB:ENSG00000179950"/>
<dbReference type="eggNOG" id="KOG0124">
    <property type="taxonomic scope" value="Eukaryota"/>
</dbReference>
<dbReference type="GeneTree" id="ENSGT00940000155594"/>
<dbReference type="HOGENOM" id="CLU_020551_3_1_1"/>
<dbReference type="InParanoid" id="Q9UHX1"/>
<dbReference type="OMA" id="VHTHKGY"/>
<dbReference type="OrthoDB" id="20943at2759"/>
<dbReference type="PAN-GO" id="Q9UHX1">
    <property type="GO annotations" value="3 GO annotations based on evolutionary models"/>
</dbReference>
<dbReference type="PhylomeDB" id="Q9UHX1"/>
<dbReference type="TreeFam" id="TF313987"/>
<dbReference type="PathwayCommons" id="Q9UHX1"/>
<dbReference type="Reactome" id="R-HSA-72163">
    <property type="pathway name" value="mRNA Splicing - Major Pathway"/>
</dbReference>
<dbReference type="SignaLink" id="Q9UHX1"/>
<dbReference type="SIGNOR" id="Q9UHX1"/>
<dbReference type="BioGRID-ORCS" id="22827">
    <property type="hits" value="843 hits in 1161 CRISPR screens"/>
</dbReference>
<dbReference type="CD-CODE" id="232F8A39">
    <property type="entry name" value="P-body"/>
</dbReference>
<dbReference type="ChiTaRS" id="PUF60">
    <property type="organism name" value="human"/>
</dbReference>
<dbReference type="EvolutionaryTrace" id="Q9UHX1"/>
<dbReference type="GeneWiki" id="PUF60"/>
<dbReference type="GenomeRNAi" id="22827"/>
<dbReference type="Pharos" id="Q9UHX1">
    <property type="development level" value="Tbio"/>
</dbReference>
<dbReference type="PRO" id="PR:Q9UHX1"/>
<dbReference type="Proteomes" id="UP000005640">
    <property type="component" value="Chromosome 8"/>
</dbReference>
<dbReference type="RNAct" id="Q9UHX1">
    <property type="molecule type" value="protein"/>
</dbReference>
<dbReference type="Bgee" id="ENSG00000179950">
    <property type="expression patterns" value="Expressed in ventricular zone and 100 other cell types or tissues"/>
</dbReference>
<dbReference type="ExpressionAtlas" id="Q9UHX1">
    <property type="expression patterns" value="baseline and differential"/>
</dbReference>
<dbReference type="GO" id="GO:0030054">
    <property type="term" value="C:cell junction"/>
    <property type="evidence" value="ECO:0000314"/>
    <property type="project" value="HPA"/>
</dbReference>
<dbReference type="GO" id="GO:0005654">
    <property type="term" value="C:nucleoplasm"/>
    <property type="evidence" value="ECO:0000314"/>
    <property type="project" value="HPA"/>
</dbReference>
<dbReference type="GO" id="GO:1990904">
    <property type="term" value="C:ribonucleoprotein complex"/>
    <property type="evidence" value="ECO:0007669"/>
    <property type="project" value="UniProtKB-KW"/>
</dbReference>
<dbReference type="GO" id="GO:0045296">
    <property type="term" value="F:cadherin binding"/>
    <property type="evidence" value="ECO:0007005"/>
    <property type="project" value="BHF-UCL"/>
</dbReference>
<dbReference type="GO" id="GO:0003677">
    <property type="term" value="F:DNA binding"/>
    <property type="evidence" value="ECO:0007669"/>
    <property type="project" value="UniProtKB-KW"/>
</dbReference>
<dbReference type="GO" id="GO:0042802">
    <property type="term" value="F:identical protein binding"/>
    <property type="evidence" value="ECO:0000353"/>
    <property type="project" value="IntAct"/>
</dbReference>
<dbReference type="GO" id="GO:0003723">
    <property type="term" value="F:RNA binding"/>
    <property type="evidence" value="ECO:0007005"/>
    <property type="project" value="UniProtKB"/>
</dbReference>
<dbReference type="GO" id="GO:0000380">
    <property type="term" value="P:alternative mRNA splicing, via spliceosome"/>
    <property type="evidence" value="ECO:0000318"/>
    <property type="project" value="GO_Central"/>
</dbReference>
<dbReference type="GO" id="GO:0006915">
    <property type="term" value="P:apoptotic process"/>
    <property type="evidence" value="ECO:0007669"/>
    <property type="project" value="UniProtKB-KW"/>
</dbReference>
<dbReference type="GO" id="GO:0006376">
    <property type="term" value="P:mRNA splice site recognition"/>
    <property type="evidence" value="ECO:0000318"/>
    <property type="project" value="GO_Central"/>
</dbReference>
<dbReference type="GO" id="GO:0000381">
    <property type="term" value="P:regulation of alternative mRNA splicing, via spliceosome"/>
    <property type="evidence" value="ECO:0000318"/>
    <property type="project" value="GO_Central"/>
</dbReference>
<dbReference type="CDD" id="cd12370">
    <property type="entry name" value="RRM1_PUF60"/>
    <property type="match status" value="1"/>
</dbReference>
<dbReference type="CDD" id="cd12371">
    <property type="entry name" value="RRM2_PUF60"/>
    <property type="match status" value="1"/>
</dbReference>
<dbReference type="CDD" id="cd12648">
    <property type="entry name" value="RRM3_UHM_PUF60"/>
    <property type="match status" value="1"/>
</dbReference>
<dbReference type="FunFam" id="3.30.70.330:FF:000133">
    <property type="entry name" value="poly(U)-binding-splicing factor PUF60 isoform X1"/>
    <property type="match status" value="1"/>
</dbReference>
<dbReference type="FunFam" id="3.30.70.330:FF:000136">
    <property type="entry name" value="poly(U)-binding-splicing factor PUF60 isoform X1"/>
    <property type="match status" value="1"/>
</dbReference>
<dbReference type="FunFam" id="3.30.70.330:FF:000152">
    <property type="entry name" value="poly(U)-binding-splicing factor PUF60 isoform X1"/>
    <property type="match status" value="1"/>
</dbReference>
<dbReference type="Gene3D" id="3.30.70.330">
    <property type="match status" value="3"/>
</dbReference>
<dbReference type="InterPro" id="IPR012677">
    <property type="entry name" value="Nucleotide-bd_a/b_plait_sf"/>
</dbReference>
<dbReference type="InterPro" id="IPR006532">
    <property type="entry name" value="PUF60-like"/>
</dbReference>
<dbReference type="InterPro" id="IPR051974">
    <property type="entry name" value="PUF60_regulator"/>
</dbReference>
<dbReference type="InterPro" id="IPR034209">
    <property type="entry name" value="PUF60_RRM1"/>
</dbReference>
<dbReference type="InterPro" id="IPR034211">
    <property type="entry name" value="PUF60_RRM2"/>
</dbReference>
<dbReference type="InterPro" id="IPR034212">
    <property type="entry name" value="PUF60_RRM3"/>
</dbReference>
<dbReference type="InterPro" id="IPR035979">
    <property type="entry name" value="RBD_domain_sf"/>
</dbReference>
<dbReference type="InterPro" id="IPR000504">
    <property type="entry name" value="RRM_dom"/>
</dbReference>
<dbReference type="InterPro" id="IPR003954">
    <property type="entry name" value="RRM_dom_euk"/>
</dbReference>
<dbReference type="NCBIfam" id="TIGR01645">
    <property type="entry name" value="half-pint"/>
    <property type="match status" value="1"/>
</dbReference>
<dbReference type="PANTHER" id="PTHR47330:SF1">
    <property type="entry name" value="POLY(U)-BINDING-SPLICING FACTOR PUF60"/>
    <property type="match status" value="1"/>
</dbReference>
<dbReference type="PANTHER" id="PTHR47330">
    <property type="entry name" value="POLY(U)-BINDING-SPLICING FACTOR PUF60-B-RELATED"/>
    <property type="match status" value="1"/>
</dbReference>
<dbReference type="Pfam" id="PF00076">
    <property type="entry name" value="RRM_1"/>
    <property type="match status" value="2"/>
</dbReference>
<dbReference type="SMART" id="SM00360">
    <property type="entry name" value="RRM"/>
    <property type="match status" value="3"/>
</dbReference>
<dbReference type="SMART" id="SM00361">
    <property type="entry name" value="RRM_1"/>
    <property type="match status" value="2"/>
</dbReference>
<dbReference type="SUPFAM" id="SSF54928">
    <property type="entry name" value="RNA-binding domain, RBD"/>
    <property type="match status" value="2"/>
</dbReference>
<dbReference type="PROSITE" id="PS50102">
    <property type="entry name" value="RRM"/>
    <property type="match status" value="3"/>
</dbReference>